<protein>
    <recommendedName>
        <fullName>Primary amine oxidase</fullName>
        <ecNumber evidence="2">1.4.3.21</ecNumber>
    </recommendedName>
    <alternativeName>
        <fullName>Copper amine oxidase</fullName>
    </alternativeName>
    <alternativeName>
        <fullName>MAOXI</fullName>
    </alternativeName>
</protein>
<organism>
    <name type="scientific">Arthrobacter sp. (strain P1)</name>
    <dbReference type="NCBI Taxonomy" id="47915"/>
    <lineage>
        <taxon>Bacteria</taxon>
        <taxon>Bacillati</taxon>
        <taxon>Actinomycetota</taxon>
        <taxon>Actinomycetes</taxon>
        <taxon>Micrococcales</taxon>
        <taxon>Micrococcaceae</taxon>
        <taxon>Arthrobacter</taxon>
    </lineage>
</organism>
<proteinExistence type="evidence at protein level"/>
<feature type="propeptide" id="PRO_0000035675" evidence="4">
    <location>
        <begin position="1"/>
        <end position="9"/>
    </location>
</feature>
<feature type="chain" id="PRO_0000035676" description="Primary amine oxidase">
    <location>
        <begin position="10"/>
        <end position="648"/>
    </location>
</feature>
<feature type="active site" description="Proton acceptor" evidence="1">
    <location>
        <position position="301"/>
    </location>
</feature>
<feature type="active site" description="Schiff-base intermediate with substrate; via topaquinone" evidence="1">
    <location>
        <position position="385"/>
    </location>
</feature>
<feature type="binding site" evidence="1">
    <location>
        <begin position="299"/>
        <end position="310"/>
    </location>
    <ligand>
        <name>substrate</name>
    </ligand>
</feature>
<feature type="binding site" evidence="2">
    <location>
        <begin position="382"/>
        <end position="387"/>
    </location>
    <ligand>
        <name>substrate</name>
    </ligand>
</feature>
<feature type="binding site" evidence="1">
    <location>
        <position position="436"/>
    </location>
    <ligand>
        <name>Cu cation</name>
        <dbReference type="ChEBI" id="CHEBI:23378"/>
    </ligand>
</feature>
<feature type="binding site" evidence="1">
    <location>
        <position position="438"/>
    </location>
    <ligand>
        <name>Cu cation</name>
        <dbReference type="ChEBI" id="CHEBI:23378"/>
    </ligand>
</feature>
<feature type="binding site" evidence="3">
    <location>
        <position position="445"/>
    </location>
    <ligand>
        <name>Mn(2+)</name>
        <dbReference type="ChEBI" id="CHEBI:29035"/>
    </ligand>
</feature>
<feature type="binding site" evidence="3">
    <location>
        <position position="446"/>
    </location>
    <ligand>
        <name>Mn(2+)</name>
        <dbReference type="ChEBI" id="CHEBI:29035"/>
    </ligand>
</feature>
<feature type="binding site" evidence="3">
    <location>
        <position position="584"/>
    </location>
    <ligand>
        <name>Mn(2+)</name>
        <dbReference type="ChEBI" id="CHEBI:29035"/>
    </ligand>
</feature>
<feature type="binding site" evidence="1">
    <location>
        <position position="595"/>
    </location>
    <ligand>
        <name>Cu cation</name>
        <dbReference type="ChEBI" id="CHEBI:23378"/>
    </ligand>
</feature>
<feature type="modified residue" description="2',4',5'-topaquinone" evidence="1">
    <location>
        <position position="385"/>
    </location>
</feature>
<feature type="disulfide bond" evidence="1">
    <location>
        <begin position="320"/>
        <end position="346"/>
    </location>
</feature>
<accession>Q07121</accession>
<sequence>MTLNAESEALVGVSHPLDPLSRVEIARAVAILKEGPAAAESFRFISVELREPSKDDLRAGVAVAREADAVLVDRAQARSFEAVVDLEAGTVDSWKLLAENIQPPFMLDEFAECEDACRKDPEVIAALAKRGLTNLDLVCFEPWSVGYFGEDNEGRRLMRALVFVRDEADDSPYAHPIENFIVFYDLNAGKVVRLEDDQAIPVPSARGNYLPKYVGEARTDLKPLNITQPEGASFTVTGNHVTWADWSFRVGFTPREGLVLHQLKFKDQGVDRPVINRASLSEMVVPYGDTAPVQAKKNAFDSGEYNIGNMANSLTLGCDCLGEIKYFDGHSVDSHGNPWTIENAICMHEEDDSILWKHFDFREGTAETRRSRKLVISFIATVANYEYAFYWHLFLDGSIEFLVKATGILSTAGQLPGEKNPYGQSLNNDGLYAPIHQHMFNVRMDFELDGVKNAVYEVDMEYPEHNPTGTAFMAVDRLLETEQKAIRKTNEAKHRFWKIANHESKNLVNEPVAYRLIPTNGIQLAARDDAYVSKRAQFARNNLWVTAYDRTERFAAGEYPNQATGADDGLHIWTQKDRNIVDTDLVVWYTFGMHHVVRLEDWPVMPRQNIGFMLEPHGFFNQNPTLNLPTSTSTTQTGEADTCCHNGK</sequence>
<comment type="function">
    <text>The exact function of MaoXI is not known.</text>
</comment>
<comment type="catalytic activity">
    <reaction evidence="2">
        <text>a primary methyl amine + O2 + H2O = an aldehyde + H2O2 + NH4(+)</text>
        <dbReference type="Rhea" id="RHEA:16153"/>
        <dbReference type="ChEBI" id="CHEBI:15377"/>
        <dbReference type="ChEBI" id="CHEBI:15379"/>
        <dbReference type="ChEBI" id="CHEBI:16240"/>
        <dbReference type="ChEBI" id="CHEBI:17478"/>
        <dbReference type="ChEBI" id="CHEBI:28938"/>
        <dbReference type="ChEBI" id="CHEBI:228804"/>
        <dbReference type="EC" id="1.4.3.21"/>
    </reaction>
</comment>
<comment type="cofactor">
    <cofactor evidence="2">
        <name>Cu cation</name>
        <dbReference type="ChEBI" id="CHEBI:23378"/>
    </cofactor>
    <cofactor evidence="1">
        <name>Zn(2+)</name>
        <dbReference type="ChEBI" id="CHEBI:29105"/>
    </cofactor>
    <text evidence="1 2">Binds 1 copper ion per subunit (By similarity). Can also use zinc ion as cofactor (By similarity).</text>
</comment>
<comment type="cofactor">
    <cofactor evidence="2">
        <name>L-topaquinone</name>
        <dbReference type="ChEBI" id="CHEBI:79027"/>
    </cofactor>
    <text evidence="2">Contains 1 topaquinone per subunit.</text>
</comment>
<comment type="cofactor">
    <cofactor evidence="3">
        <name>Mn(2+)</name>
        <dbReference type="ChEBI" id="CHEBI:29035"/>
    </cofactor>
    <text evidence="3">Binds 1 Mn(2+) ion per subunit.</text>
</comment>
<comment type="subunit">
    <text evidence="2">Homodimer.</text>
</comment>
<comment type="PTM">
    <text evidence="2">Topaquinone (TPQ) is generated by copper-dependent autoxidation of a specific tyrosyl residue.</text>
</comment>
<comment type="similarity">
    <text evidence="5">Belongs to the copper/topaquinone oxidase family.</text>
</comment>
<dbReference type="EC" id="1.4.3.21" evidence="2"/>
<dbReference type="EMBL" id="L12983">
    <property type="protein sequence ID" value="AAA22076.1"/>
    <property type="molecule type" value="Genomic_DNA"/>
</dbReference>
<dbReference type="SMR" id="Q07121"/>
<dbReference type="GO" id="GO:0005507">
    <property type="term" value="F:copper ion binding"/>
    <property type="evidence" value="ECO:0007669"/>
    <property type="project" value="InterPro"/>
</dbReference>
<dbReference type="GO" id="GO:0008131">
    <property type="term" value="F:primary methylamine oxidase activity"/>
    <property type="evidence" value="ECO:0007669"/>
    <property type="project" value="UniProtKB-EC"/>
</dbReference>
<dbReference type="GO" id="GO:0048038">
    <property type="term" value="F:quinone binding"/>
    <property type="evidence" value="ECO:0007669"/>
    <property type="project" value="InterPro"/>
</dbReference>
<dbReference type="GO" id="GO:0009308">
    <property type="term" value="P:amine metabolic process"/>
    <property type="evidence" value="ECO:0007669"/>
    <property type="project" value="InterPro"/>
</dbReference>
<dbReference type="FunFam" id="2.70.98.20:FF:000001">
    <property type="entry name" value="Amine oxidase"/>
    <property type="match status" value="1"/>
</dbReference>
<dbReference type="Gene3D" id="3.10.450.40">
    <property type="match status" value="2"/>
</dbReference>
<dbReference type="Gene3D" id="2.70.98.20">
    <property type="entry name" value="Copper amine oxidase, catalytic domain"/>
    <property type="match status" value="1"/>
</dbReference>
<dbReference type="InterPro" id="IPR054157">
    <property type="entry name" value="AGAO-like_N2"/>
</dbReference>
<dbReference type="InterPro" id="IPR049947">
    <property type="entry name" value="Cu_Am_Ox_Cu-bd"/>
</dbReference>
<dbReference type="InterPro" id="IPR049948">
    <property type="entry name" value="Cu_Am_ox_TPQ-bd"/>
</dbReference>
<dbReference type="InterPro" id="IPR000269">
    <property type="entry name" value="Cu_amine_oxidase"/>
</dbReference>
<dbReference type="InterPro" id="IPR015798">
    <property type="entry name" value="Cu_amine_oxidase_C"/>
</dbReference>
<dbReference type="InterPro" id="IPR036460">
    <property type="entry name" value="Cu_amine_oxidase_C_sf"/>
</dbReference>
<dbReference type="InterPro" id="IPR016182">
    <property type="entry name" value="Cu_amine_oxidase_N-reg"/>
</dbReference>
<dbReference type="InterPro" id="IPR015802">
    <property type="entry name" value="Cu_amine_oxidase_N3"/>
</dbReference>
<dbReference type="NCBIfam" id="NF008559">
    <property type="entry name" value="PRK11504.1"/>
    <property type="match status" value="1"/>
</dbReference>
<dbReference type="PANTHER" id="PTHR10638">
    <property type="entry name" value="COPPER AMINE OXIDASE"/>
    <property type="match status" value="1"/>
</dbReference>
<dbReference type="PANTHER" id="PTHR10638:SF86">
    <property type="entry name" value="COPPER AMINE OXIDASE 1-RELATED"/>
    <property type="match status" value="1"/>
</dbReference>
<dbReference type="Pfam" id="PF21994">
    <property type="entry name" value="AGAO-like_N2"/>
    <property type="match status" value="1"/>
</dbReference>
<dbReference type="Pfam" id="PF01179">
    <property type="entry name" value="Cu_amine_oxid"/>
    <property type="match status" value="1"/>
</dbReference>
<dbReference type="Pfam" id="PF02728">
    <property type="entry name" value="Cu_amine_oxidN3"/>
    <property type="match status" value="1"/>
</dbReference>
<dbReference type="SUPFAM" id="SSF49998">
    <property type="entry name" value="Amine oxidase catalytic domain"/>
    <property type="match status" value="1"/>
</dbReference>
<dbReference type="SUPFAM" id="SSF54416">
    <property type="entry name" value="Amine oxidase N-terminal region"/>
    <property type="match status" value="2"/>
</dbReference>
<dbReference type="PROSITE" id="PS01164">
    <property type="entry name" value="COPPER_AMINE_OXID_1"/>
    <property type="match status" value="1"/>
</dbReference>
<dbReference type="PROSITE" id="PS01165">
    <property type="entry name" value="COPPER_AMINE_OXID_2"/>
    <property type="match status" value="1"/>
</dbReference>
<name>AMO1_ARTS1</name>
<gene>
    <name type="primary">maoI</name>
</gene>
<evidence type="ECO:0000250" key="1">
    <source>
        <dbReference type="UniProtKB" id="P12807"/>
    </source>
</evidence>
<evidence type="ECO:0000250" key="2">
    <source>
        <dbReference type="UniProtKB" id="P46883"/>
    </source>
</evidence>
<evidence type="ECO:0000250" key="3">
    <source>
        <dbReference type="UniProtKB" id="Q43077"/>
    </source>
</evidence>
<evidence type="ECO:0000269" key="4">
    <source>
    </source>
</evidence>
<evidence type="ECO:0000305" key="5"/>
<keyword id="KW-0186">Copper</keyword>
<keyword id="KW-0903">Direct protein sequencing</keyword>
<keyword id="KW-1015">Disulfide bond</keyword>
<keyword id="KW-0464">Manganese</keyword>
<keyword id="KW-0479">Metal-binding</keyword>
<keyword id="KW-0560">Oxidoreductase</keyword>
<keyword id="KW-0801">TPQ</keyword>
<reference key="1">
    <citation type="journal article" date="1993" name="J. Bacteriol.">
        <title>Cloning, sequencing, expression, and regulation of the structural gene for the copper/topa quinone-containing methylamine oxidase from Arthrobacter strain P1, a Gram-positive facultative methylotroph.</title>
        <authorList>
            <person name="Zhang X."/>
            <person name="Fuller J.H."/>
            <person name="McIntire W.S."/>
        </authorList>
    </citation>
    <scope>NUCLEOTIDE SEQUENCE [GENOMIC DNA]</scope>
    <scope>PROTEIN SEQUENCE OF 10-54; 358-381 AND 456-466</scope>
</reference>